<organism>
    <name type="scientific">Bacillus subtilis (strain 168)</name>
    <dbReference type="NCBI Taxonomy" id="224308"/>
    <lineage>
        <taxon>Bacteria</taxon>
        <taxon>Bacillati</taxon>
        <taxon>Bacillota</taxon>
        <taxon>Bacilli</taxon>
        <taxon>Bacillales</taxon>
        <taxon>Bacillaceae</taxon>
        <taxon>Bacillus</taxon>
    </lineage>
</organism>
<keyword id="KW-0238">DNA-binding</keyword>
<keyword id="KW-1185">Reference proteome</keyword>
<keyword id="KW-0804">Transcription</keyword>
<keyword id="KW-0805">Transcription regulation</keyword>
<gene>
    <name type="primary">ycbG</name>
    <name type="ordered locus">BSU02500</name>
</gene>
<name>YCBG_BACSU</name>
<protein>
    <recommendedName>
        <fullName>Uncharacterized HTH-type transcriptional regulator YcbG</fullName>
    </recommendedName>
</protein>
<feature type="chain" id="PRO_0000050687" description="Uncharacterized HTH-type transcriptional regulator YcbG">
    <location>
        <begin position="1"/>
        <end position="233"/>
    </location>
</feature>
<feature type="domain" description="HTH gntR-type" evidence="1">
    <location>
        <begin position="16"/>
        <end position="84"/>
    </location>
</feature>
<feature type="DNA-binding region" description="H-T-H motif" evidence="1">
    <location>
        <begin position="44"/>
        <end position="63"/>
    </location>
</feature>
<feature type="sequence conflict" description="In Ref. 1; BAA06471." evidence="2" ref="1">
    <original>K</original>
    <variation>Q</variation>
    <location>
        <position position="205"/>
    </location>
</feature>
<evidence type="ECO:0000255" key="1">
    <source>
        <dbReference type="PROSITE-ProRule" id="PRU00307"/>
    </source>
</evidence>
<evidence type="ECO:0000305" key="2"/>
<sequence length="233" mass="26583">MYEGLEDLKVDTVNRKTLAKQVIERIVHLLSSGQLRAGDKLPTEMELMDILHVSRPVLREALSSLETLGVITRKTRGGTYFNDKIGMQPFSVMLALATDNLPAIIEARMALELGLVTIAAEKINEEELQRLQKTIDDIANSTDNHYGEADKEFHRIIALSANNPVVEGMIQSLLITHAKIDSQIPYRERDVTVEYHKKIYDALAKRDPYKAHYHMYEHLKFVRDKILKGMDEK</sequence>
<dbReference type="EMBL" id="D30808">
    <property type="protein sequence ID" value="BAA06471.1"/>
    <property type="molecule type" value="Genomic_DNA"/>
</dbReference>
<dbReference type="EMBL" id="AL009126">
    <property type="protein sequence ID" value="CAB12044.2"/>
    <property type="molecule type" value="Genomic_DNA"/>
</dbReference>
<dbReference type="PIR" id="B69753">
    <property type="entry name" value="B69753"/>
</dbReference>
<dbReference type="RefSeq" id="WP_003246338.1">
    <property type="nucleotide sequence ID" value="NZ_OZ025638.1"/>
</dbReference>
<dbReference type="SMR" id="P42239"/>
<dbReference type="FunCoup" id="P42239">
    <property type="interactions" value="129"/>
</dbReference>
<dbReference type="STRING" id="224308.BSU02500"/>
<dbReference type="PaxDb" id="224308-BSU02500"/>
<dbReference type="EnsemblBacteria" id="CAB12044">
    <property type="protein sequence ID" value="CAB12044"/>
    <property type="gene ID" value="BSU_02500"/>
</dbReference>
<dbReference type="GeneID" id="938411"/>
<dbReference type="KEGG" id="bsu:BSU02500"/>
<dbReference type="PATRIC" id="fig|224308.179.peg.257"/>
<dbReference type="eggNOG" id="COG2186">
    <property type="taxonomic scope" value="Bacteria"/>
</dbReference>
<dbReference type="InParanoid" id="P42239"/>
<dbReference type="OrthoDB" id="9782299at2"/>
<dbReference type="PhylomeDB" id="P42239"/>
<dbReference type="BioCyc" id="BSUB:BSU02500-MONOMER"/>
<dbReference type="Proteomes" id="UP000001570">
    <property type="component" value="Chromosome"/>
</dbReference>
<dbReference type="GO" id="GO:0003677">
    <property type="term" value="F:DNA binding"/>
    <property type="evidence" value="ECO:0007669"/>
    <property type="project" value="UniProtKB-KW"/>
</dbReference>
<dbReference type="GO" id="GO:0003700">
    <property type="term" value="F:DNA-binding transcription factor activity"/>
    <property type="evidence" value="ECO:0007669"/>
    <property type="project" value="InterPro"/>
</dbReference>
<dbReference type="CDD" id="cd07377">
    <property type="entry name" value="WHTH_GntR"/>
    <property type="match status" value="1"/>
</dbReference>
<dbReference type="Gene3D" id="1.20.120.530">
    <property type="entry name" value="GntR ligand-binding domain-like"/>
    <property type="match status" value="1"/>
</dbReference>
<dbReference type="Gene3D" id="1.10.10.10">
    <property type="entry name" value="Winged helix-like DNA-binding domain superfamily/Winged helix DNA-binding domain"/>
    <property type="match status" value="1"/>
</dbReference>
<dbReference type="InterPro" id="IPR011711">
    <property type="entry name" value="GntR_C"/>
</dbReference>
<dbReference type="InterPro" id="IPR008920">
    <property type="entry name" value="TF_FadR/GntR_C"/>
</dbReference>
<dbReference type="InterPro" id="IPR000524">
    <property type="entry name" value="Tscrpt_reg_HTH_GntR"/>
</dbReference>
<dbReference type="InterPro" id="IPR036388">
    <property type="entry name" value="WH-like_DNA-bd_sf"/>
</dbReference>
<dbReference type="InterPro" id="IPR036390">
    <property type="entry name" value="WH_DNA-bd_sf"/>
</dbReference>
<dbReference type="PANTHER" id="PTHR43537:SF43">
    <property type="entry name" value="GNTR-FAMILY TRANSCRIPTIONAL REGULATOR"/>
    <property type="match status" value="1"/>
</dbReference>
<dbReference type="PANTHER" id="PTHR43537">
    <property type="entry name" value="TRANSCRIPTIONAL REGULATOR, GNTR FAMILY"/>
    <property type="match status" value="1"/>
</dbReference>
<dbReference type="Pfam" id="PF07729">
    <property type="entry name" value="FCD"/>
    <property type="match status" value="1"/>
</dbReference>
<dbReference type="Pfam" id="PF00392">
    <property type="entry name" value="GntR"/>
    <property type="match status" value="1"/>
</dbReference>
<dbReference type="PRINTS" id="PR00035">
    <property type="entry name" value="HTHGNTR"/>
</dbReference>
<dbReference type="SMART" id="SM00895">
    <property type="entry name" value="FCD"/>
    <property type="match status" value="1"/>
</dbReference>
<dbReference type="SMART" id="SM00345">
    <property type="entry name" value="HTH_GNTR"/>
    <property type="match status" value="1"/>
</dbReference>
<dbReference type="SUPFAM" id="SSF48008">
    <property type="entry name" value="GntR ligand-binding domain-like"/>
    <property type="match status" value="1"/>
</dbReference>
<dbReference type="SUPFAM" id="SSF46785">
    <property type="entry name" value="Winged helix' DNA-binding domain"/>
    <property type="match status" value="1"/>
</dbReference>
<dbReference type="PROSITE" id="PS50949">
    <property type="entry name" value="HTH_GNTR"/>
    <property type="match status" value="1"/>
</dbReference>
<reference key="1">
    <citation type="journal article" date="1995" name="Microbiology">
        <title>Determination of a 21548 bp nucleotide sequence around the 24 degrees region of the Bacillus subtilis chromosome.</title>
        <authorList>
            <person name="Ogawa K."/>
            <person name="Akagawa E."/>
            <person name="Nakamura K."/>
            <person name="Yamane K."/>
        </authorList>
    </citation>
    <scope>NUCLEOTIDE SEQUENCE [GENOMIC DNA]</scope>
    <source>
        <strain>168</strain>
    </source>
</reference>
<reference key="2">
    <citation type="journal article" date="1997" name="Nature">
        <title>The complete genome sequence of the Gram-positive bacterium Bacillus subtilis.</title>
        <authorList>
            <person name="Kunst F."/>
            <person name="Ogasawara N."/>
            <person name="Moszer I."/>
            <person name="Albertini A.M."/>
            <person name="Alloni G."/>
            <person name="Azevedo V."/>
            <person name="Bertero M.G."/>
            <person name="Bessieres P."/>
            <person name="Bolotin A."/>
            <person name="Borchert S."/>
            <person name="Borriss R."/>
            <person name="Boursier L."/>
            <person name="Brans A."/>
            <person name="Braun M."/>
            <person name="Brignell S.C."/>
            <person name="Bron S."/>
            <person name="Brouillet S."/>
            <person name="Bruschi C.V."/>
            <person name="Caldwell B."/>
            <person name="Capuano V."/>
            <person name="Carter N.M."/>
            <person name="Choi S.-K."/>
            <person name="Codani J.-J."/>
            <person name="Connerton I.F."/>
            <person name="Cummings N.J."/>
            <person name="Daniel R.A."/>
            <person name="Denizot F."/>
            <person name="Devine K.M."/>
            <person name="Duesterhoeft A."/>
            <person name="Ehrlich S.D."/>
            <person name="Emmerson P.T."/>
            <person name="Entian K.-D."/>
            <person name="Errington J."/>
            <person name="Fabret C."/>
            <person name="Ferrari E."/>
            <person name="Foulger D."/>
            <person name="Fritz C."/>
            <person name="Fujita M."/>
            <person name="Fujita Y."/>
            <person name="Fuma S."/>
            <person name="Galizzi A."/>
            <person name="Galleron N."/>
            <person name="Ghim S.-Y."/>
            <person name="Glaser P."/>
            <person name="Goffeau A."/>
            <person name="Golightly E.J."/>
            <person name="Grandi G."/>
            <person name="Guiseppi G."/>
            <person name="Guy B.J."/>
            <person name="Haga K."/>
            <person name="Haiech J."/>
            <person name="Harwood C.R."/>
            <person name="Henaut A."/>
            <person name="Hilbert H."/>
            <person name="Holsappel S."/>
            <person name="Hosono S."/>
            <person name="Hullo M.-F."/>
            <person name="Itaya M."/>
            <person name="Jones L.-M."/>
            <person name="Joris B."/>
            <person name="Karamata D."/>
            <person name="Kasahara Y."/>
            <person name="Klaerr-Blanchard M."/>
            <person name="Klein C."/>
            <person name="Kobayashi Y."/>
            <person name="Koetter P."/>
            <person name="Koningstein G."/>
            <person name="Krogh S."/>
            <person name="Kumano M."/>
            <person name="Kurita K."/>
            <person name="Lapidus A."/>
            <person name="Lardinois S."/>
            <person name="Lauber J."/>
            <person name="Lazarevic V."/>
            <person name="Lee S.-M."/>
            <person name="Levine A."/>
            <person name="Liu H."/>
            <person name="Masuda S."/>
            <person name="Mauel C."/>
            <person name="Medigue C."/>
            <person name="Medina N."/>
            <person name="Mellado R.P."/>
            <person name="Mizuno M."/>
            <person name="Moestl D."/>
            <person name="Nakai S."/>
            <person name="Noback M."/>
            <person name="Noone D."/>
            <person name="O'Reilly M."/>
            <person name="Ogawa K."/>
            <person name="Ogiwara A."/>
            <person name="Oudega B."/>
            <person name="Park S.-H."/>
            <person name="Parro V."/>
            <person name="Pohl T.M."/>
            <person name="Portetelle D."/>
            <person name="Porwollik S."/>
            <person name="Prescott A.M."/>
            <person name="Presecan E."/>
            <person name="Pujic P."/>
            <person name="Purnelle B."/>
            <person name="Rapoport G."/>
            <person name="Rey M."/>
            <person name="Reynolds S."/>
            <person name="Rieger M."/>
            <person name="Rivolta C."/>
            <person name="Rocha E."/>
            <person name="Roche B."/>
            <person name="Rose M."/>
            <person name="Sadaie Y."/>
            <person name="Sato T."/>
            <person name="Scanlan E."/>
            <person name="Schleich S."/>
            <person name="Schroeter R."/>
            <person name="Scoffone F."/>
            <person name="Sekiguchi J."/>
            <person name="Sekowska A."/>
            <person name="Seror S.J."/>
            <person name="Serror P."/>
            <person name="Shin B.-S."/>
            <person name="Soldo B."/>
            <person name="Sorokin A."/>
            <person name="Tacconi E."/>
            <person name="Takagi T."/>
            <person name="Takahashi H."/>
            <person name="Takemaru K."/>
            <person name="Takeuchi M."/>
            <person name="Tamakoshi A."/>
            <person name="Tanaka T."/>
            <person name="Terpstra P."/>
            <person name="Tognoni A."/>
            <person name="Tosato V."/>
            <person name="Uchiyama S."/>
            <person name="Vandenbol M."/>
            <person name="Vannier F."/>
            <person name="Vassarotti A."/>
            <person name="Viari A."/>
            <person name="Wambutt R."/>
            <person name="Wedler E."/>
            <person name="Wedler H."/>
            <person name="Weitzenegger T."/>
            <person name="Winters P."/>
            <person name="Wipat A."/>
            <person name="Yamamoto H."/>
            <person name="Yamane K."/>
            <person name="Yasumoto K."/>
            <person name="Yata K."/>
            <person name="Yoshida K."/>
            <person name="Yoshikawa H.-F."/>
            <person name="Zumstein E."/>
            <person name="Yoshikawa H."/>
            <person name="Danchin A."/>
        </authorList>
    </citation>
    <scope>NUCLEOTIDE SEQUENCE [LARGE SCALE GENOMIC DNA]</scope>
    <source>
        <strain>168</strain>
    </source>
</reference>
<reference key="3">
    <citation type="journal article" date="2009" name="Microbiology">
        <title>From a consortium sequence to a unified sequence: the Bacillus subtilis 168 reference genome a decade later.</title>
        <authorList>
            <person name="Barbe V."/>
            <person name="Cruveiller S."/>
            <person name="Kunst F."/>
            <person name="Lenoble P."/>
            <person name="Meurice G."/>
            <person name="Sekowska A."/>
            <person name="Vallenet D."/>
            <person name="Wang T."/>
            <person name="Moszer I."/>
            <person name="Medigue C."/>
            <person name="Danchin A."/>
        </authorList>
    </citation>
    <scope>SEQUENCE REVISION TO 205</scope>
</reference>
<proteinExistence type="predicted"/>
<accession>P42239</accession>